<dbReference type="EC" id="2.4.99.28" evidence="1"/>
<dbReference type="EMBL" id="CP001025">
    <property type="protein sequence ID" value="ACB63036.1"/>
    <property type="molecule type" value="Genomic_DNA"/>
</dbReference>
<dbReference type="RefSeq" id="WP_006755020.1">
    <property type="nucleotide sequence ID" value="NC_010551.1"/>
</dbReference>
<dbReference type="SMR" id="B1YSX5"/>
<dbReference type="CAZy" id="GT51">
    <property type="family name" value="Glycosyltransferase Family 51"/>
</dbReference>
<dbReference type="KEGG" id="bac:BamMC406_0539"/>
<dbReference type="HOGENOM" id="CLU_006354_1_0_4"/>
<dbReference type="OrthoDB" id="9766909at2"/>
<dbReference type="UniPathway" id="UPA00219"/>
<dbReference type="Proteomes" id="UP000001680">
    <property type="component" value="Chromosome 1"/>
</dbReference>
<dbReference type="GO" id="GO:0009274">
    <property type="term" value="C:peptidoglycan-based cell wall"/>
    <property type="evidence" value="ECO:0007669"/>
    <property type="project" value="InterPro"/>
</dbReference>
<dbReference type="GO" id="GO:0005886">
    <property type="term" value="C:plasma membrane"/>
    <property type="evidence" value="ECO:0007669"/>
    <property type="project" value="UniProtKB-SubCell"/>
</dbReference>
<dbReference type="GO" id="GO:0016763">
    <property type="term" value="F:pentosyltransferase activity"/>
    <property type="evidence" value="ECO:0007669"/>
    <property type="project" value="InterPro"/>
</dbReference>
<dbReference type="GO" id="GO:0008955">
    <property type="term" value="F:peptidoglycan glycosyltransferase activity"/>
    <property type="evidence" value="ECO:0007669"/>
    <property type="project" value="UniProtKB-UniRule"/>
</dbReference>
<dbReference type="GO" id="GO:0071555">
    <property type="term" value="P:cell wall organization"/>
    <property type="evidence" value="ECO:0007669"/>
    <property type="project" value="UniProtKB-KW"/>
</dbReference>
<dbReference type="GO" id="GO:0009252">
    <property type="term" value="P:peptidoglycan biosynthetic process"/>
    <property type="evidence" value="ECO:0007669"/>
    <property type="project" value="UniProtKB-UniRule"/>
</dbReference>
<dbReference type="GO" id="GO:0008360">
    <property type="term" value="P:regulation of cell shape"/>
    <property type="evidence" value="ECO:0007669"/>
    <property type="project" value="UniProtKB-KW"/>
</dbReference>
<dbReference type="Gene3D" id="1.10.3810.10">
    <property type="entry name" value="Biosynthetic peptidoglycan transglycosylase-like"/>
    <property type="match status" value="1"/>
</dbReference>
<dbReference type="HAMAP" id="MF_00766">
    <property type="entry name" value="PGT_MtgA"/>
    <property type="match status" value="1"/>
</dbReference>
<dbReference type="InterPro" id="IPR001264">
    <property type="entry name" value="Glyco_trans_51"/>
</dbReference>
<dbReference type="InterPro" id="IPR023346">
    <property type="entry name" value="Lysozyme-like_dom_sf"/>
</dbReference>
<dbReference type="InterPro" id="IPR036950">
    <property type="entry name" value="PBP_transglycosylase"/>
</dbReference>
<dbReference type="InterPro" id="IPR011812">
    <property type="entry name" value="Pep_trsgly"/>
</dbReference>
<dbReference type="NCBIfam" id="TIGR02070">
    <property type="entry name" value="mono_pep_trsgly"/>
    <property type="match status" value="1"/>
</dbReference>
<dbReference type="PANTHER" id="PTHR30400:SF0">
    <property type="entry name" value="BIOSYNTHETIC PEPTIDOGLYCAN TRANSGLYCOSYLASE"/>
    <property type="match status" value="1"/>
</dbReference>
<dbReference type="PANTHER" id="PTHR30400">
    <property type="entry name" value="MONOFUNCTIONAL BIOSYNTHETIC PEPTIDOGLYCAN TRANSGLYCOSYLASE"/>
    <property type="match status" value="1"/>
</dbReference>
<dbReference type="Pfam" id="PF00912">
    <property type="entry name" value="Transgly"/>
    <property type="match status" value="1"/>
</dbReference>
<dbReference type="SUPFAM" id="SSF53955">
    <property type="entry name" value="Lysozyme-like"/>
    <property type="match status" value="1"/>
</dbReference>
<keyword id="KW-0997">Cell inner membrane</keyword>
<keyword id="KW-1003">Cell membrane</keyword>
<keyword id="KW-0133">Cell shape</keyword>
<keyword id="KW-0961">Cell wall biogenesis/degradation</keyword>
<keyword id="KW-0328">Glycosyltransferase</keyword>
<keyword id="KW-0472">Membrane</keyword>
<keyword id="KW-0573">Peptidoglycan synthesis</keyword>
<keyword id="KW-0808">Transferase</keyword>
<keyword id="KW-0812">Transmembrane</keyword>
<keyword id="KW-1133">Transmembrane helix</keyword>
<gene>
    <name evidence="1" type="primary">mtgA</name>
    <name type="ordered locus">BamMC406_0539</name>
</gene>
<evidence type="ECO:0000255" key="1">
    <source>
        <dbReference type="HAMAP-Rule" id="MF_00766"/>
    </source>
</evidence>
<accession>B1YSX5</accession>
<organism>
    <name type="scientific">Burkholderia ambifaria (strain MC40-6)</name>
    <dbReference type="NCBI Taxonomy" id="398577"/>
    <lineage>
        <taxon>Bacteria</taxon>
        <taxon>Pseudomonadati</taxon>
        <taxon>Pseudomonadota</taxon>
        <taxon>Betaproteobacteria</taxon>
        <taxon>Burkholderiales</taxon>
        <taxon>Burkholderiaceae</taxon>
        <taxon>Burkholderia</taxon>
        <taxon>Burkholderia cepacia complex</taxon>
    </lineage>
</organism>
<protein>
    <recommendedName>
        <fullName evidence="1">Biosynthetic peptidoglycan transglycosylase</fullName>
        <ecNumber evidence="1">2.4.99.28</ecNumber>
    </recommendedName>
    <alternativeName>
        <fullName evidence="1">Glycan polymerase</fullName>
    </alternativeName>
    <alternativeName>
        <fullName evidence="1">Peptidoglycan glycosyltransferase MtgA</fullName>
        <shortName evidence="1">PGT</shortName>
    </alternativeName>
</protein>
<proteinExistence type="inferred from homology"/>
<name>MTGA_BURA4</name>
<sequence>MAAVSGTRRTRAVSPTRWIVYAGSVFAGAWLATQLFYLVQIALWSFINPGSTAFMRTDAWWLSRDKPPAQVQHQWVPYDQISRNLKRALIASEDSTFATNNGYDVDAILQAWEKNKARGRIVAGGSTITQQLARNLFLSREKSYIRKGQELIITWMLETVLDKERIFEIYLNSVEWGRGVYGAEAAARYYYRIPASRLGAWQSARLAVMLPKPRWFDAHRGSAYQAQRAAVIARRMGAAELPQSQ</sequence>
<reference key="1">
    <citation type="submission" date="2008-04" db="EMBL/GenBank/DDBJ databases">
        <title>Complete sequence of chromosome 1 of Burkholderia ambifaria MC40-6.</title>
        <authorList>
            <person name="Copeland A."/>
            <person name="Lucas S."/>
            <person name="Lapidus A."/>
            <person name="Glavina del Rio T."/>
            <person name="Dalin E."/>
            <person name="Tice H."/>
            <person name="Pitluck S."/>
            <person name="Chain P."/>
            <person name="Malfatti S."/>
            <person name="Shin M."/>
            <person name="Vergez L."/>
            <person name="Lang D."/>
            <person name="Schmutz J."/>
            <person name="Larimer F."/>
            <person name="Land M."/>
            <person name="Hauser L."/>
            <person name="Kyrpides N."/>
            <person name="Lykidis A."/>
            <person name="Ramette A."/>
            <person name="Konstantinidis K."/>
            <person name="Tiedje J."/>
            <person name="Richardson P."/>
        </authorList>
    </citation>
    <scope>NUCLEOTIDE SEQUENCE [LARGE SCALE GENOMIC DNA]</scope>
    <source>
        <strain>MC40-6</strain>
    </source>
</reference>
<comment type="function">
    <text evidence="1">Peptidoglycan polymerase that catalyzes glycan chain elongation from lipid-linked precursors.</text>
</comment>
<comment type="catalytic activity">
    <reaction evidence="1">
        <text>[GlcNAc-(1-&gt;4)-Mur2Ac(oyl-L-Ala-gamma-D-Glu-L-Lys-D-Ala-D-Ala)](n)-di-trans,octa-cis-undecaprenyl diphosphate + beta-D-GlcNAc-(1-&gt;4)-Mur2Ac(oyl-L-Ala-gamma-D-Glu-L-Lys-D-Ala-D-Ala)-di-trans,octa-cis-undecaprenyl diphosphate = [GlcNAc-(1-&gt;4)-Mur2Ac(oyl-L-Ala-gamma-D-Glu-L-Lys-D-Ala-D-Ala)](n+1)-di-trans,octa-cis-undecaprenyl diphosphate + di-trans,octa-cis-undecaprenyl diphosphate + H(+)</text>
        <dbReference type="Rhea" id="RHEA:23708"/>
        <dbReference type="Rhea" id="RHEA-COMP:9602"/>
        <dbReference type="Rhea" id="RHEA-COMP:9603"/>
        <dbReference type="ChEBI" id="CHEBI:15378"/>
        <dbReference type="ChEBI" id="CHEBI:58405"/>
        <dbReference type="ChEBI" id="CHEBI:60033"/>
        <dbReference type="ChEBI" id="CHEBI:78435"/>
        <dbReference type="EC" id="2.4.99.28"/>
    </reaction>
</comment>
<comment type="pathway">
    <text evidence="1">Cell wall biogenesis; peptidoglycan biosynthesis.</text>
</comment>
<comment type="subcellular location">
    <subcellularLocation>
        <location evidence="1">Cell inner membrane</location>
        <topology evidence="1">Single-pass membrane protein</topology>
    </subcellularLocation>
</comment>
<comment type="similarity">
    <text evidence="1">Belongs to the glycosyltransferase 51 family.</text>
</comment>
<feature type="chain" id="PRO_1000133585" description="Biosynthetic peptidoglycan transglycosylase">
    <location>
        <begin position="1"/>
        <end position="245"/>
    </location>
</feature>
<feature type="transmembrane region" description="Helical" evidence="1">
    <location>
        <begin position="20"/>
        <end position="42"/>
    </location>
</feature>